<comment type="function">
    <text evidence="3">Probable transcription factor (PubMed:18794349). Binds to the DNA sequence motif 5'-[AG]GGCGCCG-3' in the promoters of target genes, including micro-RNA genes, in order to repress expression, and acting redundantly with flh-2 (PubMed:18794349).</text>
</comment>
<comment type="alternative products">
    <event type="alternative splicing"/>
    <isoform>
        <id>Q9XWR1-1</id>
        <name evidence="7">a</name>
        <sequence type="displayed"/>
    </isoform>
    <isoform>
        <id>Q9XWR1-2</id>
        <name evidence="8">b</name>
        <sequence type="described" ref="VSP_061184"/>
    </isoform>
    <isoform>
        <id>Q9XWR1-3</id>
        <name evidence="9">c</name>
        <sequence type="described" ref="VSP_061183"/>
    </isoform>
</comment>
<comment type="developmental stage">
    <text evidence="3">Expressed during embryogenesis and adulthood (at protein level) (PubMed:18794349). Expressed in most cells starting at gastrulation and diminishing by the L1 larval stage; however, also expressed in L4 larval stage and adults (PubMed:18794349).</text>
</comment>
<comment type="disruption phenotype">
    <text evidence="3">Knockout, in a flh-2 mutant background, causes poor coordination, egg-laying defects and dumpy appearance (PubMed:18794349). Causes a ninefold to 10-fold decrease in lin-14 level in embryos and about 2-fold increase in the levels of micro-RNAs lin-4 and mir-241 (PubMed:18794349). Despite the increase in lin-4 expression, post-embryonic heterochronic defects are not observed (PubMed:18794349). RNAi-mediated knockdown causes precocious embryonic expression of micro-RNA lin-4, exacerbated by simultaneous RNAi-mediated knockdown of flh-2 (PubMed:18794349).</text>
</comment>
<dbReference type="EMBL" id="BX284604">
    <property type="protein sequence ID" value="CAA21587.2"/>
    <property type="molecule type" value="Genomic_DNA"/>
</dbReference>
<dbReference type="EMBL" id="BX284604">
    <property type="protein sequence ID" value="CAO82067.1"/>
    <property type="molecule type" value="Genomic_DNA"/>
</dbReference>
<dbReference type="EMBL" id="BX284604">
    <property type="protein sequence ID" value="CBK19487.1"/>
    <property type="molecule type" value="Genomic_DNA"/>
</dbReference>
<dbReference type="PIR" id="T26466">
    <property type="entry name" value="T26466"/>
</dbReference>
<dbReference type="RefSeq" id="NP_001122806.1">
    <molecule id="Q9XWR1-2"/>
    <property type="nucleotide sequence ID" value="NM_001129334.4"/>
</dbReference>
<dbReference type="RefSeq" id="NP_001255383.1">
    <molecule id="Q9XWR1-3"/>
    <property type="nucleotide sequence ID" value="NM_001268454.3"/>
</dbReference>
<dbReference type="RefSeq" id="NP_501618.2">
    <molecule id="Q9XWR1-1"/>
    <property type="nucleotide sequence ID" value="NM_069217.9"/>
</dbReference>
<dbReference type="DIP" id="DIP-24849N"/>
<dbReference type="FunCoup" id="Q9XWR1">
    <property type="interactions" value="1321"/>
</dbReference>
<dbReference type="IntAct" id="Q9XWR1">
    <property type="interactions" value="33"/>
</dbReference>
<dbReference type="STRING" id="6239.Y11D7A.12a.1"/>
<dbReference type="PaxDb" id="6239-Y11D7A.12a"/>
<dbReference type="EnsemblMetazoa" id="Y11D7A.12a.1">
    <molecule id="Q9XWR1-1"/>
    <property type="protein sequence ID" value="Y11D7A.12a.1"/>
    <property type="gene ID" value="WBGene00012435"/>
</dbReference>
<dbReference type="EnsemblMetazoa" id="Y11D7A.12b.1">
    <molecule id="Q9XWR1-2"/>
    <property type="protein sequence ID" value="Y11D7A.12b.1"/>
    <property type="gene ID" value="WBGene00012435"/>
</dbReference>
<dbReference type="EnsemblMetazoa" id="Y11D7A.12c.1">
    <molecule id="Q9XWR1-3"/>
    <property type="protein sequence ID" value="Y11D7A.12c.1"/>
    <property type="gene ID" value="WBGene00012435"/>
</dbReference>
<dbReference type="GeneID" id="177749"/>
<dbReference type="KEGG" id="cel:CELE_Y11D7A.12"/>
<dbReference type="UCSC" id="Y11D7A.12b">
    <property type="organism name" value="c. elegans"/>
</dbReference>
<dbReference type="AGR" id="WB:WBGene00012435"/>
<dbReference type="CTD" id="177749"/>
<dbReference type="WormBase" id="Y11D7A.12a">
    <molecule id="Q9XWR1-1"/>
    <property type="protein sequence ID" value="CE35915"/>
    <property type="gene ID" value="WBGene00012435"/>
    <property type="gene designation" value="flh-1"/>
</dbReference>
<dbReference type="WormBase" id="Y11D7A.12b">
    <molecule id="Q9XWR1-2"/>
    <property type="protein sequence ID" value="CE41463"/>
    <property type="gene ID" value="WBGene00012435"/>
    <property type="gene designation" value="flh-1"/>
</dbReference>
<dbReference type="WormBase" id="Y11D7A.12c">
    <molecule id="Q9XWR1-3"/>
    <property type="protein sequence ID" value="CE20195"/>
    <property type="gene ID" value="WBGene00012435"/>
    <property type="gene designation" value="flh-1"/>
</dbReference>
<dbReference type="eggNOG" id="ENOG502T0QV">
    <property type="taxonomic scope" value="Eukaryota"/>
</dbReference>
<dbReference type="GeneTree" id="ENSGT00970000196226"/>
<dbReference type="HOGENOM" id="CLU_550096_0_0_1"/>
<dbReference type="InParanoid" id="Q9XWR1"/>
<dbReference type="OMA" id="VMFNQPM"/>
<dbReference type="OrthoDB" id="5806173at2759"/>
<dbReference type="PhylomeDB" id="Q9XWR1"/>
<dbReference type="PRO" id="PR:Q9XWR1"/>
<dbReference type="Proteomes" id="UP000001940">
    <property type="component" value="Chromosome IV"/>
</dbReference>
<dbReference type="Bgee" id="WBGene00012435">
    <property type="expression patterns" value="Expressed in germ line (C elegans) and 4 other cell types or tissues"/>
</dbReference>
<dbReference type="ExpressionAtlas" id="Q9XWR1">
    <property type="expression patterns" value="baseline and differential"/>
</dbReference>
<dbReference type="GO" id="GO:0003700">
    <property type="term" value="F:DNA-binding transcription factor activity"/>
    <property type="evidence" value="ECO:0000353"/>
    <property type="project" value="WormBase"/>
</dbReference>
<dbReference type="GO" id="GO:0043565">
    <property type="term" value="F:sequence-specific DNA binding"/>
    <property type="evidence" value="ECO:0000353"/>
    <property type="project" value="WormBase"/>
</dbReference>
<dbReference type="GO" id="GO:0008270">
    <property type="term" value="F:zinc ion binding"/>
    <property type="evidence" value="ECO:0007669"/>
    <property type="project" value="UniProtKB-KW"/>
</dbReference>
<dbReference type="GO" id="GO:0045892">
    <property type="term" value="P:negative regulation of DNA-templated transcription"/>
    <property type="evidence" value="ECO:0000316"/>
    <property type="project" value="WormBase"/>
</dbReference>
<dbReference type="GO" id="GO:0002119">
    <property type="term" value="P:nematode larval development"/>
    <property type="evidence" value="ECO:0000316"/>
    <property type="project" value="WormBase"/>
</dbReference>
<dbReference type="FunFam" id="2.20.25.240:FF:000002">
    <property type="entry name" value="FLYWCH zinc finger transcription factor homolog"/>
    <property type="match status" value="1"/>
</dbReference>
<dbReference type="Gene3D" id="2.20.25.240">
    <property type="match status" value="1"/>
</dbReference>
<dbReference type="InterPro" id="IPR052887">
    <property type="entry name" value="FLYWCH-type_ZF"/>
</dbReference>
<dbReference type="InterPro" id="IPR007588">
    <property type="entry name" value="Znf_FLYWCH"/>
</dbReference>
<dbReference type="PANTHER" id="PTHR37975:SF2">
    <property type="entry name" value="FLYWCH TRANSCRIPTION FACTOR 1"/>
    <property type="match status" value="1"/>
</dbReference>
<dbReference type="PANTHER" id="PTHR37975">
    <property type="entry name" value="FLYWCH ZINC FINGER TRANSCRIPTION FACTOR HOMOLOG"/>
    <property type="match status" value="1"/>
</dbReference>
<dbReference type="Pfam" id="PF04500">
    <property type="entry name" value="FLYWCH"/>
    <property type="match status" value="1"/>
</dbReference>
<accession>Q9XWR1</accession>
<accession>A7DTF1</accession>
<accession>D3NQA3</accession>
<proteinExistence type="evidence at protein level"/>
<gene>
    <name evidence="7" type="primary">flh-1</name>
    <name evidence="7" type="ORF">Y11D7A.12</name>
</gene>
<keyword id="KW-0025">Alternative splicing</keyword>
<keyword id="KW-0217">Developmental protein</keyword>
<keyword id="KW-0479">Metal-binding</keyword>
<keyword id="KW-1185">Reference proteome</keyword>
<keyword id="KW-0862">Zinc</keyword>
<keyword id="KW-0863">Zinc-finger</keyword>
<sequence>MYSPESMNSNISSPSPPSSSSLNAPSLADAPEVRSDDGEAETSEPSTSVTAVPMEIVSQASTSAPVNQLLASGIDMSSVIKNNAVLQALLASASAGGFGDNAGLTMSKLLTAALANGSTAVAKRDAGSPRTDIPKKTRLKVFSNGFFMTFDKLSSCQKKYFWRCEYKNTCKARMHTDIVTEKILTFIHEHNHSAPIDEEVRLYGLDPTNIERNRVYIVGNVADPNQRRKIRKQVADREAAAKRLVQQQEEEQQKQQSASSIVAARAAYAQAMQNGSIPTSSGVASFLQSTSATAPMTSHSMLLAQMPFLNNIKTEMSNMVKNEQFTPERYTQHMSPNLPLQTATIAPLIIPTENYDSPSYRQPAIKRKATDLTNEEHDLRRDPMFQPTFELARKLRKLWKGEPNRYPRTTTTPTHHFEFFLSKNDGTDEHLYVPMRINLRDEAHLKEALQDFCGQQCIGMLLFGISPKISVMFNQPMLNNWDNNQFFLLDISNPSRWRLMYVDDQAV</sequence>
<evidence type="ECO:0000255" key="1"/>
<evidence type="ECO:0000256" key="2">
    <source>
        <dbReference type="SAM" id="MobiDB-lite"/>
    </source>
</evidence>
<evidence type="ECO:0000269" key="3">
    <source>
    </source>
</evidence>
<evidence type="ECO:0000303" key="4">
    <source>
    </source>
</evidence>
<evidence type="ECO:0000305" key="5"/>
<evidence type="ECO:0000312" key="6">
    <source>
        <dbReference type="Proteomes" id="UP000001940"/>
    </source>
</evidence>
<evidence type="ECO:0000312" key="7">
    <source>
        <dbReference type="WormBase" id="Y11D7A.12a"/>
    </source>
</evidence>
<evidence type="ECO:0000312" key="8">
    <source>
        <dbReference type="WormBase" id="Y11D7A.12b"/>
    </source>
</evidence>
<evidence type="ECO:0000312" key="9">
    <source>
        <dbReference type="WormBase" id="Y11D7A.12c"/>
    </source>
</evidence>
<feature type="chain" id="PRO_0000453579" description="FLYWCH transcription factor 1">
    <location>
        <begin position="1"/>
        <end position="507"/>
    </location>
</feature>
<feature type="zinc finger region" description="FLYWCH-type" evidence="1">
    <location>
        <begin position="135"/>
        <end position="192"/>
    </location>
</feature>
<feature type="region of interest" description="Disordered" evidence="2">
    <location>
        <begin position="1"/>
        <end position="51"/>
    </location>
</feature>
<feature type="compositionally biased region" description="Low complexity" evidence="2">
    <location>
        <begin position="1"/>
        <end position="26"/>
    </location>
</feature>
<feature type="splice variant" id="VSP_061183" description="In isoform c." evidence="5">
    <location>
        <begin position="1"/>
        <end position="6"/>
    </location>
</feature>
<feature type="splice variant" id="VSP_061184" description="In isoform b." evidence="5">
    <location>
        <begin position="339"/>
        <end position="341"/>
    </location>
</feature>
<protein>
    <recommendedName>
        <fullName evidence="4">FLYWCH transcription factor 1</fullName>
    </recommendedName>
</protein>
<organism evidence="6">
    <name type="scientific">Caenorhabditis elegans</name>
    <dbReference type="NCBI Taxonomy" id="6239"/>
    <lineage>
        <taxon>Eukaryota</taxon>
        <taxon>Metazoa</taxon>
        <taxon>Ecdysozoa</taxon>
        <taxon>Nematoda</taxon>
        <taxon>Chromadorea</taxon>
        <taxon>Rhabditida</taxon>
        <taxon>Rhabditina</taxon>
        <taxon>Rhabditomorpha</taxon>
        <taxon>Rhabditoidea</taxon>
        <taxon>Rhabditidae</taxon>
        <taxon>Peloderinae</taxon>
        <taxon>Caenorhabditis</taxon>
    </lineage>
</organism>
<reference evidence="6" key="1">
    <citation type="journal article" date="1998" name="Science">
        <title>Genome sequence of the nematode C. elegans: a platform for investigating biology.</title>
        <authorList>
            <consortium name="The C. elegans sequencing consortium"/>
        </authorList>
    </citation>
    <scope>NUCLEOTIDE SEQUENCE [LARGE SCALE GENOMIC DNA]</scope>
    <source>
        <strain evidence="6">Bristol N2</strain>
    </source>
</reference>
<reference evidence="5" key="2">
    <citation type="journal article" date="2008" name="Genes Dev.">
        <title>The FLYWCH transcription factors FLH-1, FLH-2, and FLH-3 repress embryonic expression of microRNA genes in C. elegans.</title>
        <authorList>
            <person name="Ow M.C."/>
            <person name="Martinez N.J."/>
            <person name="Olsen P.H."/>
            <person name="Silverman H.S."/>
            <person name="Barrasa M.I."/>
            <person name="Conradt B."/>
            <person name="Walhout A.J."/>
            <person name="Ambros V."/>
        </authorList>
    </citation>
    <scope>FUNCTION</scope>
    <scope>DEVELOPMENTAL STAGE</scope>
    <scope>DISRUPTION PHENOTYPE</scope>
</reference>
<name>FLH1_CAEEL</name>